<name>LDHA_PARMG</name>
<evidence type="ECO:0000250" key="1"/>
<evidence type="ECO:0000250" key="2">
    <source>
        <dbReference type="UniProtKB" id="P00338"/>
    </source>
</evidence>
<evidence type="ECO:0000305" key="3"/>
<gene>
    <name type="primary">ldha</name>
</gene>
<dbReference type="EC" id="1.1.1.27" evidence="2"/>
<dbReference type="EMBL" id="AF079826">
    <property type="protein sequence ID" value="AAC63284.1"/>
    <property type="molecule type" value="mRNA"/>
</dbReference>
<dbReference type="SMR" id="O93543"/>
<dbReference type="UniPathway" id="UPA00554">
    <property type="reaction ID" value="UER00611"/>
</dbReference>
<dbReference type="GO" id="GO:0005737">
    <property type="term" value="C:cytoplasm"/>
    <property type="evidence" value="ECO:0007669"/>
    <property type="project" value="UniProtKB-SubCell"/>
</dbReference>
<dbReference type="GO" id="GO:0004459">
    <property type="term" value="F:L-lactate dehydrogenase activity"/>
    <property type="evidence" value="ECO:0007669"/>
    <property type="project" value="UniProtKB-EC"/>
</dbReference>
<dbReference type="GO" id="GO:0006089">
    <property type="term" value="P:lactate metabolic process"/>
    <property type="evidence" value="ECO:0007669"/>
    <property type="project" value="TreeGrafter"/>
</dbReference>
<dbReference type="CDD" id="cd05293">
    <property type="entry name" value="LDH_1"/>
    <property type="match status" value="1"/>
</dbReference>
<dbReference type="FunFam" id="3.40.50.720:FF:000029">
    <property type="entry name" value="L-lactate dehydrogenase A chain"/>
    <property type="match status" value="1"/>
</dbReference>
<dbReference type="FunFam" id="3.90.110.10:FF:000003">
    <property type="entry name" value="L-lactate dehydrogenase A chain"/>
    <property type="match status" value="1"/>
</dbReference>
<dbReference type="Gene3D" id="3.90.110.10">
    <property type="entry name" value="Lactate dehydrogenase/glycoside hydrolase, family 4, C-terminal"/>
    <property type="match status" value="1"/>
</dbReference>
<dbReference type="Gene3D" id="3.40.50.720">
    <property type="entry name" value="NAD(P)-binding Rossmann-like Domain"/>
    <property type="match status" value="1"/>
</dbReference>
<dbReference type="HAMAP" id="MF_00488">
    <property type="entry name" value="Lactate_dehydrog"/>
    <property type="match status" value="1"/>
</dbReference>
<dbReference type="InterPro" id="IPR001557">
    <property type="entry name" value="L-lactate/malate_DH"/>
</dbReference>
<dbReference type="InterPro" id="IPR011304">
    <property type="entry name" value="L-lactate_DH"/>
</dbReference>
<dbReference type="InterPro" id="IPR018177">
    <property type="entry name" value="L-lactate_DH_AS"/>
</dbReference>
<dbReference type="InterPro" id="IPR022383">
    <property type="entry name" value="Lactate/malate_DH_C"/>
</dbReference>
<dbReference type="InterPro" id="IPR001236">
    <property type="entry name" value="Lactate/malate_DH_N"/>
</dbReference>
<dbReference type="InterPro" id="IPR015955">
    <property type="entry name" value="Lactate_DH/Glyco_Ohase_4_C"/>
</dbReference>
<dbReference type="InterPro" id="IPR036291">
    <property type="entry name" value="NAD(P)-bd_dom_sf"/>
</dbReference>
<dbReference type="NCBIfam" id="TIGR01771">
    <property type="entry name" value="L-LDH-NAD"/>
    <property type="match status" value="1"/>
</dbReference>
<dbReference type="PANTHER" id="PTHR43128">
    <property type="entry name" value="L-2-HYDROXYCARBOXYLATE DEHYDROGENASE (NAD(P)(+))"/>
    <property type="match status" value="1"/>
</dbReference>
<dbReference type="PANTHER" id="PTHR43128:SF10">
    <property type="entry name" value="L-LACTATE DEHYDROGENASE A CHAIN"/>
    <property type="match status" value="1"/>
</dbReference>
<dbReference type="Pfam" id="PF02866">
    <property type="entry name" value="Ldh_1_C"/>
    <property type="match status" value="1"/>
</dbReference>
<dbReference type="Pfam" id="PF00056">
    <property type="entry name" value="Ldh_1_N"/>
    <property type="match status" value="1"/>
</dbReference>
<dbReference type="PIRSF" id="PIRSF000102">
    <property type="entry name" value="Lac_mal_DH"/>
    <property type="match status" value="1"/>
</dbReference>
<dbReference type="PRINTS" id="PR00086">
    <property type="entry name" value="LLDHDRGNASE"/>
</dbReference>
<dbReference type="SUPFAM" id="SSF56327">
    <property type="entry name" value="LDH C-terminal domain-like"/>
    <property type="match status" value="1"/>
</dbReference>
<dbReference type="SUPFAM" id="SSF51735">
    <property type="entry name" value="NAD(P)-binding Rossmann-fold domains"/>
    <property type="match status" value="1"/>
</dbReference>
<dbReference type="PROSITE" id="PS00064">
    <property type="entry name" value="L_LDH"/>
    <property type="match status" value="1"/>
</dbReference>
<organism>
    <name type="scientific">Paranotothenia magellanica</name>
    <name type="common">Maori cod</name>
    <name type="synonym">Gadus magellanicus</name>
    <dbReference type="NCBI Taxonomy" id="37005"/>
    <lineage>
        <taxon>Eukaryota</taxon>
        <taxon>Metazoa</taxon>
        <taxon>Chordata</taxon>
        <taxon>Craniata</taxon>
        <taxon>Vertebrata</taxon>
        <taxon>Euteleostomi</taxon>
        <taxon>Actinopterygii</taxon>
        <taxon>Neopterygii</taxon>
        <taxon>Teleostei</taxon>
        <taxon>Neoteleostei</taxon>
        <taxon>Acanthomorphata</taxon>
        <taxon>Eupercaria</taxon>
        <taxon>Perciformes</taxon>
        <taxon>Notothenioidei</taxon>
        <taxon>Nototheniidae</taxon>
        <taxon>Paranotothenia</taxon>
    </lineage>
</organism>
<sequence>MSTKEKLISHVMKEEPVGSGNKVTVVGVGMVGMASAISILLKDLCDELAMVDVMEDKLKGEVMDLQHGSLFLKTKIVGDKDYSVTANSKVVVVTAGARQQEGESRLNLVQRNVNIFKFIIPNIVKYSPNCILMVVSNPVDILTYVAWKLSGFPRHRVLGSGTNLDSARFRHLIGEKLHLHPSSCHAWIVGEHGDSSVPVWSGVNVAGVSLQGLNPQMGTEGDGENWMAIHKEVVDGAYEVIKLKGYTSWAIGMSVADLVESIIKNMHKVHPVSTLVQGMHGVKDEVFLSVPCVLGNSGLTDVIHMALKAEEEKQVQKSAETLWGVQKELTL</sequence>
<accession>O93543</accession>
<feature type="initiator methionine" description="Removed" evidence="1">
    <location>
        <position position="1"/>
    </location>
</feature>
<feature type="chain" id="PRO_0000168449" description="L-lactate dehydrogenase A chain">
    <location>
        <begin position="2"/>
        <end position="331"/>
    </location>
</feature>
<feature type="active site" description="Proton acceptor" evidence="1">
    <location>
        <position position="192"/>
    </location>
</feature>
<feature type="binding site" evidence="1">
    <location>
        <begin position="29"/>
        <end position="57"/>
    </location>
    <ligand>
        <name>NAD(+)</name>
        <dbReference type="ChEBI" id="CHEBI:57540"/>
    </ligand>
</feature>
<feature type="binding site" evidence="1">
    <location>
        <position position="98"/>
    </location>
    <ligand>
        <name>NAD(+)</name>
        <dbReference type="ChEBI" id="CHEBI:57540"/>
    </ligand>
</feature>
<feature type="binding site" evidence="1">
    <location>
        <position position="105"/>
    </location>
    <ligand>
        <name>substrate</name>
    </ligand>
</feature>
<feature type="binding site" evidence="1">
    <location>
        <position position="137"/>
    </location>
    <ligand>
        <name>NAD(+)</name>
        <dbReference type="ChEBI" id="CHEBI:57540"/>
    </ligand>
</feature>
<feature type="binding site" evidence="1">
    <location>
        <position position="137"/>
    </location>
    <ligand>
        <name>substrate</name>
    </ligand>
</feature>
<feature type="binding site" evidence="1">
    <location>
        <position position="168"/>
    </location>
    <ligand>
        <name>substrate</name>
    </ligand>
</feature>
<feature type="binding site" evidence="1">
    <location>
        <position position="247"/>
    </location>
    <ligand>
        <name>substrate</name>
    </ligand>
</feature>
<comment type="function">
    <text evidence="2">Interconverts simultaneously and stereospecifically pyruvate and lactate with concomitant interconversion of NADH and NAD(+).</text>
</comment>
<comment type="catalytic activity">
    <reaction evidence="2">
        <text>(S)-lactate + NAD(+) = pyruvate + NADH + H(+)</text>
        <dbReference type="Rhea" id="RHEA:23444"/>
        <dbReference type="ChEBI" id="CHEBI:15361"/>
        <dbReference type="ChEBI" id="CHEBI:15378"/>
        <dbReference type="ChEBI" id="CHEBI:16651"/>
        <dbReference type="ChEBI" id="CHEBI:57540"/>
        <dbReference type="ChEBI" id="CHEBI:57945"/>
        <dbReference type="EC" id="1.1.1.27"/>
    </reaction>
    <physiologicalReaction direction="left-to-right" evidence="2">
        <dbReference type="Rhea" id="RHEA:23445"/>
    </physiologicalReaction>
    <physiologicalReaction direction="right-to-left" evidence="2">
        <dbReference type="Rhea" id="RHEA:23446"/>
    </physiologicalReaction>
</comment>
<comment type="pathway">
    <text evidence="2">Fermentation; pyruvate fermentation to lactate; (S)-lactate from pyruvate: step 1/1.</text>
</comment>
<comment type="subunit">
    <text evidence="1">Homotetramer.</text>
</comment>
<comment type="subcellular location">
    <subcellularLocation>
        <location evidence="1">Cytoplasm</location>
    </subcellularLocation>
</comment>
<comment type="similarity">
    <text evidence="3">Belongs to the LDH/MDH superfamily. LDH family.</text>
</comment>
<keyword id="KW-0963">Cytoplasm</keyword>
<keyword id="KW-0520">NAD</keyword>
<keyword id="KW-0560">Oxidoreductase</keyword>
<protein>
    <recommendedName>
        <fullName>L-lactate dehydrogenase A chain</fullName>
        <shortName>LDH-A</shortName>
        <ecNumber evidence="2">1.1.1.27</ecNumber>
    </recommendedName>
</protein>
<reference key="1">
    <citation type="journal article" date="1998" name="Proc. Natl. Acad. Sci. U.S.A.">
        <title>Hot spots in cold adaptation: localized increases in conformational flexibility in lactate dehydrogenase A4 orthologs of Antarctic notothenioid fishes.</title>
        <authorList>
            <person name="Fields P.A."/>
            <person name="Somero G.N."/>
        </authorList>
    </citation>
    <scope>NUCLEOTIDE SEQUENCE [MRNA]</scope>
    <source>
        <tissue>Muscle</tissue>
    </source>
</reference>
<proteinExistence type="evidence at transcript level"/>